<proteinExistence type="inferred from homology"/>
<name>RL14_STRP3</name>
<reference key="1">
    <citation type="journal article" date="2002" name="Proc. Natl. Acad. Sci. U.S.A.">
        <title>Genome sequence of a serotype M3 strain of group A Streptococcus: phage-encoded toxins, the high-virulence phenotype, and clone emergence.</title>
        <authorList>
            <person name="Beres S.B."/>
            <person name="Sylva G.L."/>
            <person name="Barbian K.D."/>
            <person name="Lei B."/>
            <person name="Hoff J.S."/>
            <person name="Mammarella N.D."/>
            <person name="Liu M.-Y."/>
            <person name="Smoot J.C."/>
            <person name="Porcella S.F."/>
            <person name="Parkins L.D."/>
            <person name="Campbell D.S."/>
            <person name="Smith T.M."/>
            <person name="McCormick J.K."/>
            <person name="Leung D.Y.M."/>
            <person name="Schlievert P.M."/>
            <person name="Musser J.M."/>
        </authorList>
    </citation>
    <scope>NUCLEOTIDE SEQUENCE [LARGE SCALE GENOMIC DNA]</scope>
    <source>
        <strain>ATCC BAA-595 / MGAS315</strain>
    </source>
</reference>
<keyword id="KW-0687">Ribonucleoprotein</keyword>
<keyword id="KW-0689">Ribosomal protein</keyword>
<keyword id="KW-0694">RNA-binding</keyword>
<keyword id="KW-0699">rRNA-binding</keyword>
<protein>
    <recommendedName>
        <fullName evidence="1">Large ribosomal subunit protein uL14</fullName>
    </recommendedName>
    <alternativeName>
        <fullName evidence="2">50S ribosomal protein L14</fullName>
    </alternativeName>
</protein>
<comment type="function">
    <text evidence="1">Binds to 23S rRNA. Forms part of two intersubunit bridges in the 70S ribosome.</text>
</comment>
<comment type="subunit">
    <text evidence="1">Part of the 50S ribosomal subunit. Forms a cluster with proteins L3 and L19. In the 70S ribosome, L14 and L19 interact and together make contacts with the 16S rRNA in bridges B5 and B8.</text>
</comment>
<comment type="similarity">
    <text evidence="1">Belongs to the universal ribosomal protein uL14 family.</text>
</comment>
<gene>
    <name evidence="1" type="primary">rplN</name>
    <name type="ordered locus">SpyM3_0050</name>
</gene>
<accession>P0DE04</accession>
<accession>Q79YR5</accession>
<accession>Q7CFL0</accession>
<feature type="chain" id="PRO_1000055716" description="Large ribosomal subunit protein uL14">
    <location>
        <begin position="1"/>
        <end position="122"/>
    </location>
</feature>
<evidence type="ECO:0000255" key="1">
    <source>
        <dbReference type="HAMAP-Rule" id="MF_01367"/>
    </source>
</evidence>
<evidence type="ECO:0000305" key="2"/>
<organism>
    <name type="scientific">Streptococcus pyogenes serotype M3 (strain ATCC BAA-595 / MGAS315)</name>
    <dbReference type="NCBI Taxonomy" id="198466"/>
    <lineage>
        <taxon>Bacteria</taxon>
        <taxon>Bacillati</taxon>
        <taxon>Bacillota</taxon>
        <taxon>Bacilli</taxon>
        <taxon>Lactobacillales</taxon>
        <taxon>Streptococcaceae</taxon>
        <taxon>Streptococcus</taxon>
    </lineage>
</organism>
<sequence>MIQQETRLKVADNSGAREILTIKVLGGSGRKFANIGDVIVASVKQATPGGAVKKGDVVKAVIVRTKTGARRPDGSYIKFDDNAAVIIRDDKTPRGTRIFGPVARELREGGYMKIVSLAPEVL</sequence>
<dbReference type="EMBL" id="AE014074">
    <property type="protein sequence ID" value="AAM78657.1"/>
    <property type="molecule type" value="Genomic_DNA"/>
</dbReference>
<dbReference type="RefSeq" id="WP_000615920.1">
    <property type="nucleotide sequence ID" value="NC_004070.1"/>
</dbReference>
<dbReference type="SMR" id="P0DE04"/>
<dbReference type="GeneID" id="83689563"/>
<dbReference type="KEGG" id="spg:SpyM3_0050"/>
<dbReference type="HOGENOM" id="CLU_095071_2_1_9"/>
<dbReference type="Proteomes" id="UP000000564">
    <property type="component" value="Chromosome"/>
</dbReference>
<dbReference type="GO" id="GO:0022625">
    <property type="term" value="C:cytosolic large ribosomal subunit"/>
    <property type="evidence" value="ECO:0007669"/>
    <property type="project" value="TreeGrafter"/>
</dbReference>
<dbReference type="GO" id="GO:0070180">
    <property type="term" value="F:large ribosomal subunit rRNA binding"/>
    <property type="evidence" value="ECO:0007669"/>
    <property type="project" value="TreeGrafter"/>
</dbReference>
<dbReference type="GO" id="GO:0003735">
    <property type="term" value="F:structural constituent of ribosome"/>
    <property type="evidence" value="ECO:0007669"/>
    <property type="project" value="InterPro"/>
</dbReference>
<dbReference type="GO" id="GO:0006412">
    <property type="term" value="P:translation"/>
    <property type="evidence" value="ECO:0007669"/>
    <property type="project" value="UniProtKB-UniRule"/>
</dbReference>
<dbReference type="CDD" id="cd00337">
    <property type="entry name" value="Ribosomal_uL14"/>
    <property type="match status" value="1"/>
</dbReference>
<dbReference type="FunFam" id="2.40.150.20:FF:000001">
    <property type="entry name" value="50S ribosomal protein L14"/>
    <property type="match status" value="1"/>
</dbReference>
<dbReference type="Gene3D" id="2.40.150.20">
    <property type="entry name" value="Ribosomal protein L14"/>
    <property type="match status" value="1"/>
</dbReference>
<dbReference type="HAMAP" id="MF_01367">
    <property type="entry name" value="Ribosomal_uL14"/>
    <property type="match status" value="1"/>
</dbReference>
<dbReference type="InterPro" id="IPR000218">
    <property type="entry name" value="Ribosomal_uL14"/>
</dbReference>
<dbReference type="InterPro" id="IPR005745">
    <property type="entry name" value="Ribosomal_uL14_bac-type"/>
</dbReference>
<dbReference type="InterPro" id="IPR019972">
    <property type="entry name" value="Ribosomal_uL14_CS"/>
</dbReference>
<dbReference type="InterPro" id="IPR036853">
    <property type="entry name" value="Ribosomal_uL14_sf"/>
</dbReference>
<dbReference type="NCBIfam" id="TIGR01067">
    <property type="entry name" value="rplN_bact"/>
    <property type="match status" value="1"/>
</dbReference>
<dbReference type="PANTHER" id="PTHR11761">
    <property type="entry name" value="50S/60S RIBOSOMAL PROTEIN L14/L23"/>
    <property type="match status" value="1"/>
</dbReference>
<dbReference type="PANTHER" id="PTHR11761:SF3">
    <property type="entry name" value="LARGE RIBOSOMAL SUBUNIT PROTEIN UL14M"/>
    <property type="match status" value="1"/>
</dbReference>
<dbReference type="Pfam" id="PF00238">
    <property type="entry name" value="Ribosomal_L14"/>
    <property type="match status" value="1"/>
</dbReference>
<dbReference type="SMART" id="SM01374">
    <property type="entry name" value="Ribosomal_L14"/>
    <property type="match status" value="1"/>
</dbReference>
<dbReference type="SUPFAM" id="SSF50193">
    <property type="entry name" value="Ribosomal protein L14"/>
    <property type="match status" value="1"/>
</dbReference>
<dbReference type="PROSITE" id="PS00049">
    <property type="entry name" value="RIBOSOMAL_L14"/>
    <property type="match status" value="1"/>
</dbReference>